<sequence>MSYIKMKDNCRNFSLSKWQDTRKPWLILIIVTIGLTCIAHFLFQEYLFMKPCEQCVYIRFDMLVMAIGGMIALINPANNIIKIFSYSLAFYGIWLGLEHCLTLNHIHEVVHSENPFAGVDGCREIPIYPFNLPLYKWAPSWFLPTGECGMDTPVVPENAYNHLNAFQKFFIGTPPDFENGLYSNGWYLIPSLKFMNMAICCLIAFLCCFVVLFAMFIAYVLDKNKPNAKIFALVIVALVLVLKFIGESKNPNQNIASLNQVVLRYS</sequence>
<protein>
    <recommendedName>
        <fullName>Putative protein-disulfide oxidoreductase DsbI</fullName>
    </recommendedName>
</protein>
<comment type="function">
    <text evidence="1">Required for disulfide bond formation in some proteins. Part of a redox system composed of DsbI and DsbL that mediates formation of an essential disulfide bond in AssT (By similarity).</text>
</comment>
<comment type="subunit">
    <text evidence="1">Interacts with DsbL.</text>
</comment>
<comment type="subcellular location">
    <subcellularLocation>
        <location evidence="1">Cell inner membrane</location>
        <topology evidence="1">Multi-pass membrane protein</topology>
    </subcellularLocation>
</comment>
<comment type="similarity">
    <text evidence="3">Belongs to the DsbB family. DsbI subfamily.</text>
</comment>
<comment type="caution">
    <text evidence="3">Was originally given the gene name dsbB; however this seems to belong to a different DsbB subfamily.</text>
</comment>
<comment type="sequence caution" evidence="3">
    <conflict type="erroneous initiation">
        <sequence resource="EMBL-CDS" id="AAW35289"/>
    </conflict>
</comment>
<organism>
    <name type="scientific">Campylobacter jejuni (strain RM1221)</name>
    <dbReference type="NCBI Taxonomy" id="195099"/>
    <lineage>
        <taxon>Bacteria</taxon>
        <taxon>Pseudomonadati</taxon>
        <taxon>Campylobacterota</taxon>
        <taxon>Epsilonproteobacteria</taxon>
        <taxon>Campylobacterales</taxon>
        <taxon>Campylobacteraceae</taxon>
        <taxon>Campylobacter</taxon>
    </lineage>
</organism>
<keyword id="KW-0997">Cell inner membrane</keyword>
<keyword id="KW-1003">Cell membrane</keyword>
<keyword id="KW-1015">Disulfide bond</keyword>
<keyword id="KW-0249">Electron transport</keyword>
<keyword id="KW-0472">Membrane</keyword>
<keyword id="KW-0560">Oxidoreductase</keyword>
<keyword id="KW-0676">Redox-active center</keyword>
<keyword id="KW-0812">Transmembrane</keyword>
<keyword id="KW-1133">Transmembrane helix</keyword>
<keyword id="KW-0813">Transport</keyword>
<name>DSBI_CAMJR</name>
<proteinExistence type="inferred from homology"/>
<gene>
    <name type="primary">dsbI</name>
    <name type="ordered locus">CJE0952</name>
</gene>
<accession>Q5HUT1</accession>
<dbReference type="EMBL" id="CP000025">
    <property type="protein sequence ID" value="AAW35289.1"/>
    <property type="status" value="ALT_INIT"/>
    <property type="molecule type" value="Genomic_DNA"/>
</dbReference>
<dbReference type="RefSeq" id="WP_002867468.1">
    <property type="nucleotide sequence ID" value="NC_003912.7"/>
</dbReference>
<dbReference type="KEGG" id="cjr:CJE0952"/>
<dbReference type="HOGENOM" id="CLU_090583_0_0_7"/>
<dbReference type="GO" id="GO:0005886">
    <property type="term" value="C:plasma membrane"/>
    <property type="evidence" value="ECO:0007669"/>
    <property type="project" value="UniProtKB-SubCell"/>
</dbReference>
<dbReference type="GO" id="GO:0015035">
    <property type="term" value="F:protein-disulfide reductase activity"/>
    <property type="evidence" value="ECO:0007669"/>
    <property type="project" value="InterPro"/>
</dbReference>
<dbReference type="GO" id="GO:0006457">
    <property type="term" value="P:protein folding"/>
    <property type="evidence" value="ECO:0007669"/>
    <property type="project" value="InterPro"/>
</dbReference>
<dbReference type="Gene3D" id="1.20.1550.10">
    <property type="entry name" value="DsbB-like"/>
    <property type="match status" value="1"/>
</dbReference>
<dbReference type="InterPro" id="IPR003752">
    <property type="entry name" value="DiS_bond_form_DsbB/BdbC"/>
</dbReference>
<dbReference type="InterPro" id="IPR050183">
    <property type="entry name" value="DsbB"/>
</dbReference>
<dbReference type="InterPro" id="IPR023380">
    <property type="entry name" value="DsbB-like_sf"/>
</dbReference>
<dbReference type="NCBIfam" id="NF003304">
    <property type="entry name" value="PRK04307.1"/>
    <property type="match status" value="1"/>
</dbReference>
<dbReference type="PANTHER" id="PTHR36570">
    <property type="entry name" value="DISULFIDE BOND FORMATION PROTEIN B"/>
    <property type="match status" value="1"/>
</dbReference>
<dbReference type="PANTHER" id="PTHR36570:SF1">
    <property type="entry name" value="PROTEIN-DISULFIDE OXIDOREDUCTASE DSBI"/>
    <property type="match status" value="1"/>
</dbReference>
<dbReference type="Pfam" id="PF02600">
    <property type="entry name" value="DsbB"/>
    <property type="match status" value="1"/>
</dbReference>
<dbReference type="SUPFAM" id="SSF158442">
    <property type="entry name" value="DsbB-like"/>
    <property type="match status" value="1"/>
</dbReference>
<feature type="chain" id="PRO_0000295641" description="Putative protein-disulfide oxidoreductase DsbI">
    <location>
        <begin position="1"/>
        <end position="266"/>
    </location>
</feature>
<feature type="transmembrane region" description="Helical" evidence="2">
    <location>
        <begin position="24"/>
        <end position="44"/>
    </location>
</feature>
<feature type="transmembrane region" description="Helical" evidence="2">
    <location>
        <begin position="61"/>
        <end position="81"/>
    </location>
</feature>
<feature type="transmembrane region" description="Helical" evidence="2">
    <location>
        <begin position="83"/>
        <end position="103"/>
    </location>
</feature>
<feature type="transmembrane region" description="Helical" evidence="2">
    <location>
        <begin position="201"/>
        <end position="221"/>
    </location>
</feature>
<feature type="transmembrane region" description="Helical" evidence="2">
    <location>
        <begin position="226"/>
        <end position="246"/>
    </location>
</feature>
<feature type="disulfide bond" description="Redox-active" evidence="1">
    <location>
        <begin position="52"/>
        <end position="55"/>
    </location>
</feature>
<feature type="disulfide bond" description="Redox-active" evidence="1">
    <location>
        <begin position="122"/>
        <end position="148"/>
    </location>
</feature>
<reference key="1">
    <citation type="journal article" date="2005" name="PLoS Biol.">
        <title>Major structural differences and novel potential virulence mechanisms from the genomes of multiple Campylobacter species.</title>
        <authorList>
            <person name="Fouts D.E."/>
            <person name="Mongodin E.F."/>
            <person name="Mandrell R.E."/>
            <person name="Miller W.G."/>
            <person name="Rasko D.A."/>
            <person name="Ravel J."/>
            <person name="Brinkac L.M."/>
            <person name="DeBoy R.T."/>
            <person name="Parker C.T."/>
            <person name="Daugherty S.C."/>
            <person name="Dodson R.J."/>
            <person name="Durkin A.S."/>
            <person name="Madupu R."/>
            <person name="Sullivan S.A."/>
            <person name="Shetty J.U."/>
            <person name="Ayodeji M.A."/>
            <person name="Shvartsbeyn A."/>
            <person name="Schatz M.C."/>
            <person name="Badger J.H."/>
            <person name="Fraser C.M."/>
            <person name="Nelson K.E."/>
        </authorList>
    </citation>
    <scope>NUCLEOTIDE SEQUENCE [LARGE SCALE GENOMIC DNA]</scope>
    <source>
        <strain>RM1221</strain>
    </source>
</reference>
<evidence type="ECO:0000250" key="1"/>
<evidence type="ECO:0000255" key="2"/>
<evidence type="ECO:0000305" key="3"/>